<sequence>MLGVRALFGIGLLVTSRGGFVLTHTRACSSAASNIYSKHLTHRPTCTMANTGVKYLGQEEAQQIDEELFSDFSFSVDQLMELAGLSCATAVAKGYPVTSLLKSPARVLVICGPGNNGGDGLVCARHLKLFGYEPSVLYPKRPNKQLFQNLSIQCQKMEIPFLTEMPEADLIDEAYSLVVDAIFGFSFKGAVREPFGEILSQLKKITVPIASVDIPSGWDVEKGCPDGIQPDMLISLTAPKKSAALFKGRFHFLGGRFVPPVLEQKYQLNLPQYPGTECVFQLN</sequence>
<keyword id="KW-0413">Isomerase</keyword>
<keyword id="KW-0445">Lipid transport</keyword>
<keyword id="KW-0479">Metal-binding</keyword>
<keyword id="KW-0496">Mitochondrion</keyword>
<keyword id="KW-0520">NAD</keyword>
<keyword id="KW-0521">NADP</keyword>
<keyword id="KW-0547">Nucleotide-binding</keyword>
<keyword id="KW-0630">Potassium</keyword>
<keyword id="KW-1185">Reference proteome</keyword>
<keyword id="KW-0964">Secreted</keyword>
<keyword id="KW-0809">Transit peptide</keyword>
<keyword id="KW-0813">Transport</keyword>
<reference key="1">
    <citation type="journal article" date="2013" name="Nature">
        <title>The zebrafish reference genome sequence and its relationship to the human genome.</title>
        <authorList>
            <person name="Howe K."/>
            <person name="Clark M.D."/>
            <person name="Torroja C.F."/>
            <person name="Torrance J."/>
            <person name="Berthelot C."/>
            <person name="Muffato M."/>
            <person name="Collins J.E."/>
            <person name="Humphray S."/>
            <person name="McLaren K."/>
            <person name="Matthews L."/>
            <person name="McLaren S."/>
            <person name="Sealy I."/>
            <person name="Caccamo M."/>
            <person name="Churcher C."/>
            <person name="Scott C."/>
            <person name="Barrett J.C."/>
            <person name="Koch R."/>
            <person name="Rauch G.J."/>
            <person name="White S."/>
            <person name="Chow W."/>
            <person name="Kilian B."/>
            <person name="Quintais L.T."/>
            <person name="Guerra-Assuncao J.A."/>
            <person name="Zhou Y."/>
            <person name="Gu Y."/>
            <person name="Yen J."/>
            <person name="Vogel J.H."/>
            <person name="Eyre T."/>
            <person name="Redmond S."/>
            <person name="Banerjee R."/>
            <person name="Chi J."/>
            <person name="Fu B."/>
            <person name="Langley E."/>
            <person name="Maguire S.F."/>
            <person name="Laird G.K."/>
            <person name="Lloyd D."/>
            <person name="Kenyon E."/>
            <person name="Donaldson S."/>
            <person name="Sehra H."/>
            <person name="Almeida-King J."/>
            <person name="Loveland J."/>
            <person name="Trevanion S."/>
            <person name="Jones M."/>
            <person name="Quail M."/>
            <person name="Willey D."/>
            <person name="Hunt A."/>
            <person name="Burton J."/>
            <person name="Sims S."/>
            <person name="McLay K."/>
            <person name="Plumb B."/>
            <person name="Davis J."/>
            <person name="Clee C."/>
            <person name="Oliver K."/>
            <person name="Clark R."/>
            <person name="Riddle C."/>
            <person name="Elliot D."/>
            <person name="Threadgold G."/>
            <person name="Harden G."/>
            <person name="Ware D."/>
            <person name="Begum S."/>
            <person name="Mortimore B."/>
            <person name="Kerry G."/>
            <person name="Heath P."/>
            <person name="Phillimore B."/>
            <person name="Tracey A."/>
            <person name="Corby N."/>
            <person name="Dunn M."/>
            <person name="Johnson C."/>
            <person name="Wood J."/>
            <person name="Clark S."/>
            <person name="Pelan S."/>
            <person name="Griffiths G."/>
            <person name="Smith M."/>
            <person name="Glithero R."/>
            <person name="Howden P."/>
            <person name="Barker N."/>
            <person name="Lloyd C."/>
            <person name="Stevens C."/>
            <person name="Harley J."/>
            <person name="Holt K."/>
            <person name="Panagiotidis G."/>
            <person name="Lovell J."/>
            <person name="Beasley H."/>
            <person name="Henderson C."/>
            <person name="Gordon D."/>
            <person name="Auger K."/>
            <person name="Wright D."/>
            <person name="Collins J."/>
            <person name="Raisen C."/>
            <person name="Dyer L."/>
            <person name="Leung K."/>
            <person name="Robertson L."/>
            <person name="Ambridge K."/>
            <person name="Leongamornlert D."/>
            <person name="McGuire S."/>
            <person name="Gilderthorp R."/>
            <person name="Griffiths C."/>
            <person name="Manthravadi D."/>
            <person name="Nichol S."/>
            <person name="Barker G."/>
            <person name="Whitehead S."/>
            <person name="Kay M."/>
            <person name="Brown J."/>
            <person name="Murnane C."/>
            <person name="Gray E."/>
            <person name="Humphries M."/>
            <person name="Sycamore N."/>
            <person name="Barker D."/>
            <person name="Saunders D."/>
            <person name="Wallis J."/>
            <person name="Babbage A."/>
            <person name="Hammond S."/>
            <person name="Mashreghi-Mohammadi M."/>
            <person name="Barr L."/>
            <person name="Martin S."/>
            <person name="Wray P."/>
            <person name="Ellington A."/>
            <person name="Matthews N."/>
            <person name="Ellwood M."/>
            <person name="Woodmansey R."/>
            <person name="Clark G."/>
            <person name="Cooper J."/>
            <person name="Tromans A."/>
            <person name="Grafham D."/>
            <person name="Skuce C."/>
            <person name="Pandian R."/>
            <person name="Andrews R."/>
            <person name="Harrison E."/>
            <person name="Kimberley A."/>
            <person name="Garnett J."/>
            <person name="Fosker N."/>
            <person name="Hall R."/>
            <person name="Garner P."/>
            <person name="Kelly D."/>
            <person name="Bird C."/>
            <person name="Palmer S."/>
            <person name="Gehring I."/>
            <person name="Berger A."/>
            <person name="Dooley C.M."/>
            <person name="Ersan-Urun Z."/>
            <person name="Eser C."/>
            <person name="Geiger H."/>
            <person name="Geisler M."/>
            <person name="Karotki L."/>
            <person name="Kirn A."/>
            <person name="Konantz J."/>
            <person name="Konantz M."/>
            <person name="Oberlander M."/>
            <person name="Rudolph-Geiger S."/>
            <person name="Teucke M."/>
            <person name="Lanz C."/>
            <person name="Raddatz G."/>
            <person name="Osoegawa K."/>
            <person name="Zhu B."/>
            <person name="Rapp A."/>
            <person name="Widaa S."/>
            <person name="Langford C."/>
            <person name="Yang F."/>
            <person name="Schuster S.C."/>
            <person name="Carter N.P."/>
            <person name="Harrow J."/>
            <person name="Ning Z."/>
            <person name="Herrero J."/>
            <person name="Searle S.M."/>
            <person name="Enright A."/>
            <person name="Geisler R."/>
            <person name="Plasterk R.H."/>
            <person name="Lee C."/>
            <person name="Westerfield M."/>
            <person name="de Jong P.J."/>
            <person name="Zon L.I."/>
            <person name="Postlethwait J.H."/>
            <person name="Nusslein-Volhard C."/>
            <person name="Hubbard T.J."/>
            <person name="Roest Crollius H."/>
            <person name="Rogers J."/>
            <person name="Stemple D.L."/>
        </authorList>
    </citation>
    <scope>NUCLEOTIDE SEQUENCE [LARGE SCALE GENOMIC DNA]</scope>
    <source>
        <strain>Tuebingen</strain>
    </source>
</reference>
<reference key="2">
    <citation type="submission" date="2004-07" db="EMBL/GenBank/DDBJ databases">
        <authorList>
            <consortium name="NIH - Zebrafish Gene Collection (ZGC) project"/>
        </authorList>
    </citation>
    <scope>NUCLEOTIDE SEQUENCE [LARGE SCALE MRNA]</scope>
</reference>
<reference key="3">
    <citation type="journal article" date="2013" name="Nature">
        <title>Control of angiogenesis by AIBP-mediated cholesterol efflux.</title>
        <authorList>
            <person name="Fang L."/>
            <person name="Choi S.H."/>
            <person name="Baek J.S."/>
            <person name="Liu C."/>
            <person name="Almazan F."/>
            <person name="Ulrich F."/>
            <person name="Wiesner P."/>
            <person name="Taleb A."/>
            <person name="Deer E."/>
            <person name="Pattison J."/>
            <person name="Torres-Vazquez J."/>
            <person name="Li A.C."/>
            <person name="Miller Y.I."/>
        </authorList>
    </citation>
    <scope>INTERACTION WITH APOA1A</scope>
    <scope>BINDS TO HDL</scope>
    <scope>DISRUPTION PHENOTYPE</scope>
</reference>
<name>NNRE_DANRE</name>
<gene>
    <name evidence="1" type="primary">naxe</name>
    <name evidence="4" type="synonym">aibp</name>
    <name type="synonym">apoa1bp</name>
    <name type="ORF">si:dkeyp-84f11.6</name>
    <name type="ORF">zgc:92263</name>
</gene>
<organism>
    <name type="scientific">Danio rerio</name>
    <name type="common">Zebrafish</name>
    <name type="synonym">Brachydanio rerio</name>
    <dbReference type="NCBI Taxonomy" id="7955"/>
    <lineage>
        <taxon>Eukaryota</taxon>
        <taxon>Metazoa</taxon>
        <taxon>Chordata</taxon>
        <taxon>Craniata</taxon>
        <taxon>Vertebrata</taxon>
        <taxon>Euteleostomi</taxon>
        <taxon>Actinopterygii</taxon>
        <taxon>Neopterygii</taxon>
        <taxon>Teleostei</taxon>
        <taxon>Ostariophysi</taxon>
        <taxon>Cypriniformes</taxon>
        <taxon>Danionidae</taxon>
        <taxon>Danioninae</taxon>
        <taxon>Danio</taxon>
    </lineage>
</organism>
<accession>Q6DHK1</accession>
<comment type="function">
    <text evidence="1 2">Catalyzes the epimerization of the S- and R-forms of NAD(P)HX, a damaged form of NAD(P)H that is a result of enzymatic or heat-dependent hydration. This is a prerequisite for the S-specific NAD(P)H-hydrate dehydratase to allow the repair of both epimers of NAD(P)HX.</text>
</comment>
<comment type="catalytic activity">
    <reaction evidence="1">
        <text>(6R)-NADHX = (6S)-NADHX</text>
        <dbReference type="Rhea" id="RHEA:32215"/>
        <dbReference type="ChEBI" id="CHEBI:64074"/>
        <dbReference type="ChEBI" id="CHEBI:64075"/>
        <dbReference type="EC" id="5.1.99.6"/>
    </reaction>
</comment>
<comment type="catalytic activity">
    <reaction evidence="1">
        <text>(6R)-NADPHX = (6S)-NADPHX</text>
        <dbReference type="Rhea" id="RHEA:32227"/>
        <dbReference type="ChEBI" id="CHEBI:64076"/>
        <dbReference type="ChEBI" id="CHEBI:64077"/>
        <dbReference type="EC" id="5.1.99.6"/>
    </reaction>
</comment>
<comment type="cofactor">
    <cofactor evidence="2">
        <name>K(+)</name>
        <dbReference type="ChEBI" id="CHEBI:29103"/>
    </cofactor>
    <text evidence="2">Binds 1 potassium ion per subunit.</text>
</comment>
<comment type="subunit">
    <text evidence="1 3">Homodimer (By similarity). Interacts with apoa1a (PubMed:23719382). Binds to high-density lipoprotein.</text>
</comment>
<comment type="subcellular location">
    <subcellularLocation>
        <location evidence="2">Mitochondrion</location>
    </subcellularLocation>
    <subcellularLocation>
        <location evidence="2">Secreted</location>
    </subcellularLocation>
</comment>
<comment type="disruption phenotype">
    <text evidence="3">Morpholino knockdowns show no change in levels of free (unesterified) cholesterol.</text>
</comment>
<comment type="similarity">
    <text evidence="2">Belongs to the NnrE/AIBP family.</text>
</comment>
<evidence type="ECO:0000250" key="1">
    <source>
        <dbReference type="UniProtKB" id="Q8NCW5"/>
    </source>
</evidence>
<evidence type="ECO:0000255" key="2">
    <source>
        <dbReference type="HAMAP-Rule" id="MF_03159"/>
    </source>
</evidence>
<evidence type="ECO:0000269" key="3">
    <source>
    </source>
</evidence>
<evidence type="ECO:0000303" key="4">
    <source>
    </source>
</evidence>
<protein>
    <recommendedName>
        <fullName evidence="2">NAD(P)H-hydrate epimerase</fullName>
        <ecNumber evidence="1">5.1.99.6</ecNumber>
    </recommendedName>
    <alternativeName>
        <fullName evidence="2">Apolipoprotein A-I-binding protein</fullName>
        <shortName evidence="2">AI-BP</shortName>
    </alternativeName>
    <alternativeName>
        <fullName evidence="1">NAD(P)HX epimerase</fullName>
    </alternativeName>
</protein>
<dbReference type="EC" id="5.1.99.6" evidence="1"/>
<dbReference type="EMBL" id="BX890617">
    <property type="protein sequence ID" value="CAK11463.1"/>
    <property type="molecule type" value="Genomic_DNA"/>
</dbReference>
<dbReference type="EMBL" id="BC075969">
    <property type="protein sequence ID" value="AAH75969.1"/>
    <property type="molecule type" value="mRNA"/>
</dbReference>
<dbReference type="RefSeq" id="NP_001002618.1">
    <property type="nucleotide sequence ID" value="NM_001002618.1"/>
</dbReference>
<dbReference type="SMR" id="Q6DHK1"/>
<dbReference type="FunCoup" id="Q6DHK1">
    <property type="interactions" value="2278"/>
</dbReference>
<dbReference type="STRING" id="7955.ENSDARP00000076185"/>
<dbReference type="PaxDb" id="7955-ENSDARP00000076185"/>
<dbReference type="Ensembl" id="ENSDART00000081746">
    <property type="protein sequence ID" value="ENSDARP00000076185"/>
    <property type="gene ID" value="ENSDARG00000058806"/>
</dbReference>
<dbReference type="GeneID" id="436891"/>
<dbReference type="KEGG" id="dre:436891"/>
<dbReference type="AGR" id="ZFIN:ZDB-GENE-040718-362"/>
<dbReference type="CTD" id="128240"/>
<dbReference type="ZFIN" id="ZDB-GENE-040718-362">
    <property type="gene designation" value="naxe"/>
</dbReference>
<dbReference type="eggNOG" id="KOG2585">
    <property type="taxonomic scope" value="Eukaryota"/>
</dbReference>
<dbReference type="HOGENOM" id="CLU_024853_3_0_1"/>
<dbReference type="InParanoid" id="Q6DHK1"/>
<dbReference type="OMA" id="SMFRGRY"/>
<dbReference type="OrthoDB" id="10064708at2759"/>
<dbReference type="PhylomeDB" id="Q6DHK1"/>
<dbReference type="TreeFam" id="TF300197"/>
<dbReference type="Reactome" id="R-DRE-197264">
    <property type="pathway name" value="Nicotinamide salvaging"/>
</dbReference>
<dbReference type="PRO" id="PR:Q6DHK1"/>
<dbReference type="Proteomes" id="UP000000437">
    <property type="component" value="Chromosome 19"/>
</dbReference>
<dbReference type="Bgee" id="ENSDARG00000058806">
    <property type="expression patterns" value="Expressed in testis and 28 other cell types or tissues"/>
</dbReference>
<dbReference type="GO" id="GO:0005576">
    <property type="term" value="C:extracellular region"/>
    <property type="evidence" value="ECO:0007669"/>
    <property type="project" value="UniProtKB-SubCell"/>
</dbReference>
<dbReference type="GO" id="GO:0005739">
    <property type="term" value="C:mitochondrion"/>
    <property type="evidence" value="ECO:0000318"/>
    <property type="project" value="GO_Central"/>
</dbReference>
<dbReference type="GO" id="GO:0046872">
    <property type="term" value="F:metal ion binding"/>
    <property type="evidence" value="ECO:0007669"/>
    <property type="project" value="UniProtKB-KW"/>
</dbReference>
<dbReference type="GO" id="GO:0052856">
    <property type="term" value="F:NAD(P)HX epimerase activity"/>
    <property type="evidence" value="ECO:0000318"/>
    <property type="project" value="GO_Central"/>
</dbReference>
<dbReference type="GO" id="GO:0000166">
    <property type="term" value="F:nucleotide binding"/>
    <property type="evidence" value="ECO:0007669"/>
    <property type="project" value="UniProtKB-KW"/>
</dbReference>
<dbReference type="GO" id="GO:0006869">
    <property type="term" value="P:lipid transport"/>
    <property type="evidence" value="ECO:0007669"/>
    <property type="project" value="UniProtKB-KW"/>
</dbReference>
<dbReference type="FunFam" id="3.40.50.10260:FF:000002">
    <property type="entry name" value="NAD(P)H-hydrate epimerase"/>
    <property type="match status" value="1"/>
</dbReference>
<dbReference type="Gene3D" id="3.40.50.10260">
    <property type="entry name" value="YjeF N-terminal domain"/>
    <property type="match status" value="1"/>
</dbReference>
<dbReference type="HAMAP" id="MF_01966">
    <property type="entry name" value="NADHX_epimerase"/>
    <property type="match status" value="1"/>
</dbReference>
<dbReference type="InterPro" id="IPR004443">
    <property type="entry name" value="YjeF_N_dom"/>
</dbReference>
<dbReference type="InterPro" id="IPR036652">
    <property type="entry name" value="YjeF_N_dom_sf"/>
</dbReference>
<dbReference type="InterPro" id="IPR032976">
    <property type="entry name" value="YJEFN_prot_NAXE-like"/>
</dbReference>
<dbReference type="NCBIfam" id="TIGR00197">
    <property type="entry name" value="yjeF_nterm"/>
    <property type="match status" value="1"/>
</dbReference>
<dbReference type="PANTHER" id="PTHR13232">
    <property type="entry name" value="NAD(P)H-HYDRATE EPIMERASE"/>
    <property type="match status" value="1"/>
</dbReference>
<dbReference type="PANTHER" id="PTHR13232:SF11">
    <property type="entry name" value="NAD(P)H-HYDRATE EPIMERASE"/>
    <property type="match status" value="1"/>
</dbReference>
<dbReference type="Pfam" id="PF03853">
    <property type="entry name" value="YjeF_N"/>
    <property type="match status" value="1"/>
</dbReference>
<dbReference type="SUPFAM" id="SSF64153">
    <property type="entry name" value="YjeF N-terminal domain-like"/>
    <property type="match status" value="1"/>
</dbReference>
<dbReference type="PROSITE" id="PS51385">
    <property type="entry name" value="YJEF_N"/>
    <property type="match status" value="1"/>
</dbReference>
<proteinExistence type="evidence at protein level"/>
<feature type="transit peptide" description="Mitochondrion" evidence="2">
    <location>
        <begin position="1"/>
        <end position="28"/>
    </location>
</feature>
<feature type="chain" id="PRO_0000292425" description="NAD(P)H-hydrate epimerase">
    <location>
        <begin position="29"/>
        <end position="283"/>
    </location>
</feature>
<feature type="domain" description="YjeF N-terminal" evidence="2">
    <location>
        <begin position="61"/>
        <end position="270"/>
    </location>
</feature>
<feature type="binding site" evidence="2">
    <location>
        <begin position="115"/>
        <end position="119"/>
    </location>
    <ligand>
        <name>(6S)-NADPHX</name>
        <dbReference type="ChEBI" id="CHEBI:64076"/>
    </ligand>
</feature>
<feature type="binding site" evidence="2">
    <location>
        <position position="116"/>
    </location>
    <ligand>
        <name>K(+)</name>
        <dbReference type="ChEBI" id="CHEBI:29103"/>
    </ligand>
</feature>
<feature type="binding site" evidence="2">
    <location>
        <position position="180"/>
    </location>
    <ligand>
        <name>K(+)</name>
        <dbReference type="ChEBI" id="CHEBI:29103"/>
    </ligand>
</feature>
<feature type="binding site" evidence="2">
    <location>
        <begin position="184"/>
        <end position="190"/>
    </location>
    <ligand>
        <name>(6S)-NADPHX</name>
        <dbReference type="ChEBI" id="CHEBI:64076"/>
    </ligand>
</feature>
<feature type="binding site" evidence="2">
    <location>
        <position position="213"/>
    </location>
    <ligand>
        <name>(6S)-NADPHX</name>
        <dbReference type="ChEBI" id="CHEBI:64076"/>
    </ligand>
</feature>
<feature type="binding site" evidence="2">
    <location>
        <position position="216"/>
    </location>
    <ligand>
        <name>K(+)</name>
        <dbReference type="ChEBI" id="CHEBI:29103"/>
    </ligand>
</feature>